<comment type="function">
    <text evidence="1 2">O-methyltransferase that catalyzes the 2 O-methylation steps in the ubiquinone biosynthetic pathway.</text>
</comment>
<comment type="catalytic activity">
    <reaction evidence="1 2">
        <text>a 3-demethylubiquinol + S-adenosyl-L-methionine = a ubiquinol + S-adenosyl-L-homocysteine + H(+)</text>
        <dbReference type="Rhea" id="RHEA:44380"/>
        <dbReference type="Rhea" id="RHEA-COMP:9566"/>
        <dbReference type="Rhea" id="RHEA-COMP:10914"/>
        <dbReference type="ChEBI" id="CHEBI:15378"/>
        <dbReference type="ChEBI" id="CHEBI:17976"/>
        <dbReference type="ChEBI" id="CHEBI:57856"/>
        <dbReference type="ChEBI" id="CHEBI:59789"/>
        <dbReference type="ChEBI" id="CHEBI:84422"/>
        <dbReference type="EC" id="2.1.1.64"/>
    </reaction>
</comment>
<comment type="catalytic activity">
    <reaction evidence="1 2">
        <text>a 3-(all-trans-polyprenyl)benzene-1,2-diol + S-adenosyl-L-methionine = a 2-methoxy-6-(all-trans-polyprenyl)phenol + S-adenosyl-L-homocysteine + H(+)</text>
        <dbReference type="Rhea" id="RHEA:31411"/>
        <dbReference type="Rhea" id="RHEA-COMP:9550"/>
        <dbReference type="Rhea" id="RHEA-COMP:9551"/>
        <dbReference type="ChEBI" id="CHEBI:15378"/>
        <dbReference type="ChEBI" id="CHEBI:57856"/>
        <dbReference type="ChEBI" id="CHEBI:59789"/>
        <dbReference type="ChEBI" id="CHEBI:62729"/>
        <dbReference type="ChEBI" id="CHEBI:62731"/>
        <dbReference type="EC" id="2.1.1.222"/>
    </reaction>
</comment>
<comment type="pathway">
    <text evidence="1">Cofactor biosynthesis; ubiquinone biosynthesis.</text>
</comment>
<comment type="subunit">
    <text evidence="3 5">Homodimer (Probable). Component of the Ubi complex metabolon, which regroups five ubiquinone biosynthesis proteins (UbiE, UbiF, UbiG, UbiH and UbiI) and two accessory factors (UbiK and the lipid-binding protein UbiJ) (PubMed:30686758).</text>
</comment>
<comment type="interaction">
    <interactant intactId="EBI-559367">
        <id>P17993</id>
    </interactant>
    <interactant intactId="EBI-542255">
        <id>P61175</id>
        <label>rplV</label>
    </interactant>
    <organismsDiffer>false</organismsDiffer>
    <experiments>3</experiments>
</comment>
<comment type="subcellular location">
    <subcellularLocation>
        <location evidence="3">Cytoplasm</location>
    </subcellularLocation>
</comment>
<comment type="similarity">
    <text evidence="1">Belongs to the methyltransferase superfamily. UbiG/COQ3 family.</text>
</comment>
<dbReference type="EC" id="2.1.1.222" evidence="1 2"/>
<dbReference type="EC" id="2.1.1.64" evidence="1 2"/>
<dbReference type="EMBL" id="Y00544">
    <property type="protein sequence ID" value="CAA68610.1"/>
    <property type="molecule type" value="Genomic_DNA"/>
</dbReference>
<dbReference type="EMBL" id="M87509">
    <property type="protein sequence ID" value="AAA24714.1"/>
    <property type="molecule type" value="Genomic_DNA"/>
</dbReference>
<dbReference type="EMBL" id="U00096">
    <property type="protein sequence ID" value="AAC75292.1"/>
    <property type="molecule type" value="Genomic_DNA"/>
</dbReference>
<dbReference type="EMBL" id="AP009048">
    <property type="protein sequence ID" value="BAA16049.1"/>
    <property type="molecule type" value="Genomic_DNA"/>
</dbReference>
<dbReference type="PIR" id="A47682">
    <property type="entry name" value="A47682"/>
</dbReference>
<dbReference type="RefSeq" id="NP_416735.1">
    <property type="nucleotide sequence ID" value="NC_000913.3"/>
</dbReference>
<dbReference type="RefSeq" id="WP_000990765.1">
    <property type="nucleotide sequence ID" value="NZ_SSZK01000030.1"/>
</dbReference>
<dbReference type="PDB" id="4KDC">
    <property type="method" value="X-ray"/>
    <property type="resolution" value="2.09 A"/>
    <property type="chains" value="A=1-240"/>
</dbReference>
<dbReference type="PDB" id="4KDR">
    <property type="method" value="X-ray"/>
    <property type="resolution" value="2.00 A"/>
    <property type="chains" value="A=1-159, A=188-240"/>
</dbReference>
<dbReference type="PDB" id="5DPM">
    <property type="method" value="X-ray"/>
    <property type="resolution" value="2.10 A"/>
    <property type="chains" value="A=1-240"/>
</dbReference>
<dbReference type="PDBsum" id="4KDC"/>
<dbReference type="PDBsum" id="4KDR"/>
<dbReference type="PDBsum" id="5DPM"/>
<dbReference type="SMR" id="P17993"/>
<dbReference type="BioGRID" id="4262129">
    <property type="interactions" value="23"/>
</dbReference>
<dbReference type="BioGRID" id="850953">
    <property type="interactions" value="7"/>
</dbReference>
<dbReference type="DIP" id="DIP-11070N"/>
<dbReference type="FunCoup" id="P17993">
    <property type="interactions" value="642"/>
</dbReference>
<dbReference type="IntAct" id="P17993">
    <property type="interactions" value="19"/>
</dbReference>
<dbReference type="STRING" id="511145.b2232"/>
<dbReference type="jPOST" id="P17993"/>
<dbReference type="PaxDb" id="511145-b2232"/>
<dbReference type="EnsemblBacteria" id="AAC75292">
    <property type="protein sequence ID" value="AAC75292"/>
    <property type="gene ID" value="b2232"/>
</dbReference>
<dbReference type="GeneID" id="75206477"/>
<dbReference type="GeneID" id="946607"/>
<dbReference type="KEGG" id="ecj:JW2226"/>
<dbReference type="KEGG" id="eco:b2232"/>
<dbReference type="KEGG" id="ecoc:C3026_12470"/>
<dbReference type="PATRIC" id="fig|1411691.4.peg.3"/>
<dbReference type="EchoBASE" id="EB1133"/>
<dbReference type="eggNOG" id="COG2227">
    <property type="taxonomic scope" value="Bacteria"/>
</dbReference>
<dbReference type="HOGENOM" id="CLU_042432_5_0_6"/>
<dbReference type="InParanoid" id="P17993"/>
<dbReference type="OMA" id="LASRWWD"/>
<dbReference type="OrthoDB" id="9801538at2"/>
<dbReference type="PhylomeDB" id="P17993"/>
<dbReference type="BioCyc" id="EcoCyc:DHHB-METHYLTRANSFER-MONOMER"/>
<dbReference type="BioCyc" id="MetaCyc:DHHB-METHYLTRANSFER-MONOMER"/>
<dbReference type="BRENDA" id="2.1.1.114">
    <property type="organism ID" value="2026"/>
</dbReference>
<dbReference type="BRENDA" id="2.1.1.222">
    <property type="organism ID" value="2026"/>
</dbReference>
<dbReference type="UniPathway" id="UPA00232"/>
<dbReference type="EvolutionaryTrace" id="P17993"/>
<dbReference type="PRO" id="PR:P17993"/>
<dbReference type="Proteomes" id="UP000000625">
    <property type="component" value="Chromosome"/>
</dbReference>
<dbReference type="GO" id="GO:0009898">
    <property type="term" value="C:cytoplasmic side of plasma membrane"/>
    <property type="evidence" value="ECO:0000305"/>
    <property type="project" value="EcoCyc"/>
</dbReference>
<dbReference type="GO" id="GO:0005829">
    <property type="term" value="C:cytosol"/>
    <property type="evidence" value="ECO:0000314"/>
    <property type="project" value="EcoCyc"/>
</dbReference>
<dbReference type="GO" id="GO:0110142">
    <property type="term" value="C:ubiquinone biosynthesis complex"/>
    <property type="evidence" value="ECO:0000314"/>
    <property type="project" value="EcoCyc"/>
</dbReference>
<dbReference type="GO" id="GO:0008425">
    <property type="term" value="F:2-methoxy-6-polyprenyl-1,4-benzoquinol methyltransferase activity"/>
    <property type="evidence" value="ECO:0000314"/>
    <property type="project" value="EcoCyc"/>
</dbReference>
<dbReference type="GO" id="GO:0102208">
    <property type="term" value="F:2-polyprenyl-6-hydroxyphenol methylase activity"/>
    <property type="evidence" value="ECO:0007669"/>
    <property type="project" value="UniProtKB-EC"/>
</dbReference>
<dbReference type="GO" id="GO:0061542">
    <property type="term" value="F:3-demethylubiquinol 3-O-methyltransferase activity"/>
    <property type="evidence" value="ECO:0000314"/>
    <property type="project" value="EcoCyc"/>
</dbReference>
<dbReference type="GO" id="GO:0008168">
    <property type="term" value="F:methyltransferase activity"/>
    <property type="evidence" value="ECO:0000318"/>
    <property type="project" value="GO_Central"/>
</dbReference>
<dbReference type="GO" id="GO:1901611">
    <property type="term" value="F:phosphatidylglycerol binding"/>
    <property type="evidence" value="ECO:0000314"/>
    <property type="project" value="EcoCyc"/>
</dbReference>
<dbReference type="GO" id="GO:0010420">
    <property type="term" value="F:polyprenyldihydroxybenzoate methyltransferase activity"/>
    <property type="evidence" value="ECO:0007669"/>
    <property type="project" value="InterPro"/>
</dbReference>
<dbReference type="GO" id="GO:0042538">
    <property type="term" value="P:hyperosmotic salinity response"/>
    <property type="evidence" value="ECO:0000315"/>
    <property type="project" value="EcoCyc"/>
</dbReference>
<dbReference type="GO" id="GO:0032259">
    <property type="term" value="P:methylation"/>
    <property type="evidence" value="ECO:0007669"/>
    <property type="project" value="UniProtKB-KW"/>
</dbReference>
<dbReference type="GO" id="GO:0006744">
    <property type="term" value="P:ubiquinone biosynthetic process"/>
    <property type="evidence" value="ECO:0000315"/>
    <property type="project" value="EcoCyc"/>
</dbReference>
<dbReference type="CDD" id="cd02440">
    <property type="entry name" value="AdoMet_MTases"/>
    <property type="match status" value="1"/>
</dbReference>
<dbReference type="FunFam" id="3.40.50.150:FF:000028">
    <property type="entry name" value="Ubiquinone biosynthesis O-methyltransferase"/>
    <property type="match status" value="1"/>
</dbReference>
<dbReference type="Gene3D" id="3.40.50.150">
    <property type="entry name" value="Vaccinia Virus protein VP39"/>
    <property type="match status" value="1"/>
</dbReference>
<dbReference type="HAMAP" id="MF_00472">
    <property type="entry name" value="UbiG"/>
    <property type="match status" value="1"/>
</dbReference>
<dbReference type="InterPro" id="IPR029063">
    <property type="entry name" value="SAM-dependent_MTases_sf"/>
</dbReference>
<dbReference type="InterPro" id="IPR010233">
    <property type="entry name" value="UbiG_MeTrfase"/>
</dbReference>
<dbReference type="NCBIfam" id="TIGR01983">
    <property type="entry name" value="UbiG"/>
    <property type="match status" value="1"/>
</dbReference>
<dbReference type="PANTHER" id="PTHR43464">
    <property type="entry name" value="METHYLTRANSFERASE"/>
    <property type="match status" value="1"/>
</dbReference>
<dbReference type="PANTHER" id="PTHR43464:SF19">
    <property type="entry name" value="UBIQUINONE BIOSYNTHESIS O-METHYLTRANSFERASE, MITOCHONDRIAL"/>
    <property type="match status" value="1"/>
</dbReference>
<dbReference type="Pfam" id="PF13489">
    <property type="entry name" value="Methyltransf_23"/>
    <property type="match status" value="1"/>
</dbReference>
<dbReference type="SUPFAM" id="SSF53335">
    <property type="entry name" value="S-adenosyl-L-methionine-dependent methyltransferases"/>
    <property type="match status" value="1"/>
</dbReference>
<gene>
    <name evidence="1" type="primary">ubiG</name>
    <name type="synonym">pufX</name>
    <name type="synonym">yfaB</name>
    <name type="ordered locus">b2232</name>
    <name type="ordered locus">JW2226</name>
</gene>
<sequence length="240" mass="26555">MNAEKSPVNHNVDHEEIAKFEAVASRWWDLEGEFKPLHRINPLRLGYIAERAGGLFGKKVLDVGCGGGILAESMAREGATVTGLDMGFEPLQVAKLHALESGIQVDYVQETVEEHAAKHAGQYDVVTCMEMLEHVPDPQSVVRACAQLVKPGGDVFFSTLNRNGKSWLMAVVGAEYILRMVPKGTHDVKKFIKPAELLGWVDQTSLKERHITGLHYNPITNTFKLGPGVDVNYMLHTQNK</sequence>
<feature type="chain" id="PRO_0000193379" description="Ubiquinone biosynthesis O-methyltransferase">
    <location>
        <begin position="1"/>
        <end position="240"/>
    </location>
</feature>
<feature type="binding site" evidence="1 4">
    <location>
        <position position="44"/>
    </location>
    <ligand>
        <name>S-adenosyl-L-methionine</name>
        <dbReference type="ChEBI" id="CHEBI:59789"/>
    </ligand>
</feature>
<feature type="binding site" evidence="1 4">
    <location>
        <position position="64"/>
    </location>
    <ligand>
        <name>S-adenosyl-L-methionine</name>
        <dbReference type="ChEBI" id="CHEBI:59789"/>
    </ligand>
</feature>
<feature type="binding site" evidence="1 4">
    <location>
        <position position="85"/>
    </location>
    <ligand>
        <name>S-adenosyl-L-methionine</name>
        <dbReference type="ChEBI" id="CHEBI:59789"/>
    </ligand>
</feature>
<feature type="binding site" evidence="1 4">
    <location>
        <position position="129"/>
    </location>
    <ligand>
        <name>S-adenosyl-L-methionine</name>
        <dbReference type="ChEBI" id="CHEBI:59789"/>
    </ligand>
</feature>
<feature type="helix" evidence="7">
    <location>
        <begin position="14"/>
        <end position="23"/>
    </location>
</feature>
<feature type="helix" evidence="7">
    <location>
        <begin position="24"/>
        <end position="26"/>
    </location>
</feature>
<feature type="helix" evidence="7">
    <location>
        <begin position="35"/>
        <end position="52"/>
    </location>
</feature>
<feature type="strand" evidence="7">
    <location>
        <begin position="59"/>
        <end position="63"/>
    </location>
</feature>
<feature type="helix" evidence="7">
    <location>
        <begin position="69"/>
        <end position="76"/>
    </location>
</feature>
<feature type="strand" evidence="7">
    <location>
        <begin position="80"/>
        <end position="86"/>
    </location>
</feature>
<feature type="helix" evidence="7">
    <location>
        <begin position="88"/>
        <end position="101"/>
    </location>
</feature>
<feature type="strand" evidence="7">
    <location>
        <begin position="106"/>
        <end position="110"/>
    </location>
</feature>
<feature type="helix" evidence="7">
    <location>
        <begin position="112"/>
        <end position="118"/>
    </location>
</feature>
<feature type="strand" evidence="7">
    <location>
        <begin position="123"/>
        <end position="130"/>
    </location>
</feature>
<feature type="helix" evidence="7">
    <location>
        <begin position="132"/>
        <end position="134"/>
    </location>
</feature>
<feature type="helix" evidence="7">
    <location>
        <begin position="138"/>
        <end position="148"/>
    </location>
</feature>
<feature type="strand" evidence="7">
    <location>
        <begin position="149"/>
        <end position="159"/>
    </location>
</feature>
<feature type="helix" evidence="6">
    <location>
        <begin position="167"/>
        <end position="172"/>
    </location>
</feature>
<feature type="helix" evidence="6">
    <location>
        <begin position="174"/>
        <end position="179"/>
    </location>
</feature>
<feature type="helix" evidence="7">
    <location>
        <begin position="194"/>
        <end position="201"/>
    </location>
</feature>
<feature type="strand" evidence="7">
    <location>
        <begin position="204"/>
        <end position="217"/>
    </location>
</feature>
<feature type="turn" evidence="7">
    <location>
        <begin position="218"/>
        <end position="221"/>
    </location>
</feature>
<feature type="strand" evidence="7">
    <location>
        <begin position="222"/>
        <end position="227"/>
    </location>
</feature>
<feature type="strand" evidence="7">
    <location>
        <begin position="233"/>
        <end position="239"/>
    </location>
</feature>
<evidence type="ECO:0000255" key="1">
    <source>
        <dbReference type="HAMAP-Rule" id="MF_00472"/>
    </source>
</evidence>
<evidence type="ECO:0000269" key="2">
    <source>
    </source>
</evidence>
<evidence type="ECO:0000269" key="3">
    <source>
    </source>
</evidence>
<evidence type="ECO:0000269" key="4">
    <source ref="9"/>
</evidence>
<evidence type="ECO:0000305" key="5"/>
<evidence type="ECO:0007829" key="6">
    <source>
        <dbReference type="PDB" id="4KDC"/>
    </source>
</evidence>
<evidence type="ECO:0007829" key="7">
    <source>
        <dbReference type="PDB" id="4KDR"/>
    </source>
</evidence>
<keyword id="KW-0002">3D-structure</keyword>
<keyword id="KW-0963">Cytoplasm</keyword>
<keyword id="KW-0489">Methyltransferase</keyword>
<keyword id="KW-1185">Reference proteome</keyword>
<keyword id="KW-0949">S-adenosyl-L-methionine</keyword>
<keyword id="KW-0808">Transferase</keyword>
<keyword id="KW-0831">Ubiquinone biosynthesis</keyword>
<protein>
    <recommendedName>
        <fullName evidence="1">Ubiquinone biosynthesis O-methyltransferase</fullName>
    </recommendedName>
    <alternativeName>
        <fullName evidence="1">2-octaprenyl-6-hydroxyphenol methylase</fullName>
        <ecNumber evidence="1 2">2.1.1.222</ecNumber>
    </alternativeName>
    <alternativeName>
        <fullName evidence="1">3-demethylubiquinone-8 3-O-methyltransferase</fullName>
        <ecNumber evidence="1 2">2.1.1.64</ecNumber>
    </alternativeName>
</protein>
<accession>P17993</accession>
<accession>P76924</accession>
<proteinExistence type="evidence at protein level"/>
<name>UBIG_ECOLI</name>
<reference key="1">
    <citation type="journal article" date="1992" name="J. Gen. Microbiol.">
        <title>Isolation and characterization of Escherichia coli mutants affected in aerobic respiration: the cloning and nucleotide sequence of ubiG. Identification of an S-adenosylmethionine-binding motif in protein, RNA, and small-molecule methyltransferases.</title>
        <authorList>
            <person name="Wu G."/>
            <person name="Williams H.D."/>
            <person name="Zamanian M."/>
            <person name="Gibson F."/>
            <person name="Poole R.K."/>
        </authorList>
    </citation>
    <scope>NUCLEOTIDE SEQUENCE [GENOMIC DNA]</scope>
    <source>
        <strain>K12</strain>
    </source>
</reference>
<reference key="2">
    <citation type="journal article" date="1987" name="Mol. Microbiol.">
        <title>The parD- mutant of Escherichia coli also carries a gyrAam mutation. The complete sequence of gyrA.</title>
        <authorList>
            <person name="Hussain K."/>
            <person name="Elliott E.J."/>
            <person name="Salmond G.P.C."/>
        </authorList>
    </citation>
    <scope>NUCLEOTIDE SEQUENCE [GENOMIC DNA]</scope>
    <source>
        <strain>OV6</strain>
    </source>
</reference>
<reference key="3">
    <citation type="journal article" date="1997" name="DNA Res.">
        <title>Construction of a contiguous 874-kb sequence of the Escherichia coli-K12 genome corresponding to 50.0-68.8 min on the linkage map and analysis of its sequence features.</title>
        <authorList>
            <person name="Yamamoto Y."/>
            <person name="Aiba H."/>
            <person name="Baba T."/>
            <person name="Hayashi K."/>
            <person name="Inada T."/>
            <person name="Isono K."/>
            <person name="Itoh T."/>
            <person name="Kimura S."/>
            <person name="Kitagawa M."/>
            <person name="Makino K."/>
            <person name="Miki T."/>
            <person name="Mitsuhashi N."/>
            <person name="Mizobuchi K."/>
            <person name="Mori H."/>
            <person name="Nakade S."/>
            <person name="Nakamura Y."/>
            <person name="Nashimoto H."/>
            <person name="Oshima T."/>
            <person name="Oyama S."/>
            <person name="Saito N."/>
            <person name="Sampei G."/>
            <person name="Satoh Y."/>
            <person name="Sivasundaram S."/>
            <person name="Tagami H."/>
            <person name="Takahashi H."/>
            <person name="Takeda J."/>
            <person name="Takemoto K."/>
            <person name="Uehara K."/>
            <person name="Wada C."/>
            <person name="Yamagata S."/>
            <person name="Horiuchi T."/>
        </authorList>
    </citation>
    <scope>NUCLEOTIDE SEQUENCE [LARGE SCALE GENOMIC DNA]</scope>
    <source>
        <strain>K12 / W3110 / ATCC 27325 / DSM 5911</strain>
    </source>
</reference>
<reference key="4">
    <citation type="journal article" date="1997" name="Science">
        <title>The complete genome sequence of Escherichia coli K-12.</title>
        <authorList>
            <person name="Blattner F.R."/>
            <person name="Plunkett G. III"/>
            <person name="Bloch C.A."/>
            <person name="Perna N.T."/>
            <person name="Burland V."/>
            <person name="Riley M."/>
            <person name="Collado-Vides J."/>
            <person name="Glasner J.D."/>
            <person name="Rode C.K."/>
            <person name="Mayhew G.F."/>
            <person name="Gregor J."/>
            <person name="Davis N.W."/>
            <person name="Kirkpatrick H.A."/>
            <person name="Goeden M.A."/>
            <person name="Rose D.J."/>
            <person name="Mau B."/>
            <person name="Shao Y."/>
        </authorList>
    </citation>
    <scope>NUCLEOTIDE SEQUENCE [LARGE SCALE GENOMIC DNA]</scope>
    <source>
        <strain>K12 / MG1655 / ATCC 47076</strain>
    </source>
</reference>
<reference key="5">
    <citation type="journal article" date="2006" name="Mol. Syst. Biol.">
        <title>Highly accurate genome sequences of Escherichia coli K-12 strains MG1655 and W3110.</title>
        <authorList>
            <person name="Hayashi K."/>
            <person name="Morooka N."/>
            <person name="Yamamoto Y."/>
            <person name="Fujita K."/>
            <person name="Isono K."/>
            <person name="Choi S."/>
            <person name="Ohtsubo E."/>
            <person name="Baba T."/>
            <person name="Wanner B.L."/>
            <person name="Mori H."/>
            <person name="Horiuchi T."/>
        </authorList>
    </citation>
    <scope>NUCLEOTIDE SEQUENCE [LARGE SCALE GENOMIC DNA]</scope>
    <source>
        <strain>K12 / W3110 / ATCC 27325 / DSM 5911</strain>
    </source>
</reference>
<reference key="6">
    <citation type="journal article" date="1999" name="J. Biol. Chem.">
        <title>Yeast and rat Coq3 and Escherichia coli UbiG polypeptides catalyze both O-methyltransferase steps in coenzyme Q biosynthesis.</title>
        <authorList>
            <person name="Poon W.W."/>
            <person name="Barkovich R.J."/>
            <person name="Hsu A.Y."/>
            <person name="Frankel A."/>
            <person name="Lee P.T."/>
            <person name="Shepherd J.N."/>
            <person name="Myles D.C."/>
            <person name="Clarke C.F."/>
        </authorList>
    </citation>
    <scope>FUNCTION</scope>
    <scope>CATALYTIC ACTIVITY</scope>
</reference>
<reference key="7">
    <citation type="journal article" date="2019" name="Cell Chem. Biol.">
        <title>A soluble metabolon synthesizes the isoprenoid lipid ubiquinone.</title>
        <authorList>
            <person name="Hajj Chehade M."/>
            <person name="Pelosi L."/>
            <person name="Fyfe C.D."/>
            <person name="Loiseau L."/>
            <person name="Rascalou B."/>
            <person name="Brugiere S."/>
            <person name="Kazemzadeh K."/>
            <person name="Vo C.D."/>
            <person name="Ciccone L."/>
            <person name="Aussel L."/>
            <person name="Coute Y."/>
            <person name="Fontecave M."/>
            <person name="Barras F."/>
            <person name="Lombard M."/>
            <person name="Pierrel F."/>
        </authorList>
    </citation>
    <scope>SUBUNIT</scope>
    <scope>SUBCELLULAR LOCATION</scope>
</reference>
<reference key="8">
    <citation type="submission" date="2013-04" db="PDB data bank">
        <title>Crystal structure of UbiG.</title>
        <authorList>
            <person name="Zhu Y."/>
            <person name="Teng M."/>
            <person name="Li X."/>
        </authorList>
    </citation>
    <scope>X-RAY CRYSTALLOGRAPHY (2.09 ANGSTROMS)</scope>
</reference>
<reference key="9">
    <citation type="submission" date="2013-04" db="PDB data bank">
        <title>Crystal structure of the UbiG/SAH complex.</title>
        <authorList>
            <person name="Zhu Y."/>
            <person name="Teng M."/>
            <person name="Li X."/>
        </authorList>
    </citation>
    <scope>X-RAY CRYSTALLOGRAPHY (2.00 ANGSTROMS) OF 1-159 AND 188-240 IN COMPLEX WITH S-ADENOSYL-L-HOMOCYSTEINE</scope>
</reference>
<organism>
    <name type="scientific">Escherichia coli (strain K12)</name>
    <dbReference type="NCBI Taxonomy" id="83333"/>
    <lineage>
        <taxon>Bacteria</taxon>
        <taxon>Pseudomonadati</taxon>
        <taxon>Pseudomonadota</taxon>
        <taxon>Gammaproteobacteria</taxon>
        <taxon>Enterobacterales</taxon>
        <taxon>Enterobacteriaceae</taxon>
        <taxon>Escherichia</taxon>
    </lineage>
</organism>